<evidence type="ECO:0000255" key="1">
    <source>
        <dbReference type="HAMAP-Rule" id="MF_00198"/>
    </source>
</evidence>
<accession>B2TMY2</accession>
<reference key="1">
    <citation type="submission" date="2008-04" db="EMBL/GenBank/DDBJ databases">
        <title>Complete sequence of Clostridium botulinum strain Eklund.</title>
        <authorList>
            <person name="Brinkac L.M."/>
            <person name="Brown J.L."/>
            <person name="Bruce D."/>
            <person name="Detter C."/>
            <person name="Munk C."/>
            <person name="Smith L.A."/>
            <person name="Smith T.J."/>
            <person name="Sutton G."/>
            <person name="Brettin T.S."/>
        </authorList>
    </citation>
    <scope>NUCLEOTIDE SEQUENCE [LARGE SCALE GENOMIC DNA]</scope>
    <source>
        <strain>Eklund 17B / Type B</strain>
    </source>
</reference>
<comment type="function">
    <text evidence="1">Catalyzes the irreversible transfer of a propylamine group from the amino donor S-adenosylmethioninamine (decarboxy-AdoMet) to putrescine (1,4-diaminobutane) to yield spermidine.</text>
</comment>
<comment type="catalytic activity">
    <reaction evidence="1">
        <text>S-adenosyl 3-(methylsulfanyl)propylamine + putrescine = S-methyl-5'-thioadenosine + spermidine + H(+)</text>
        <dbReference type="Rhea" id="RHEA:12721"/>
        <dbReference type="ChEBI" id="CHEBI:15378"/>
        <dbReference type="ChEBI" id="CHEBI:17509"/>
        <dbReference type="ChEBI" id="CHEBI:57443"/>
        <dbReference type="ChEBI" id="CHEBI:57834"/>
        <dbReference type="ChEBI" id="CHEBI:326268"/>
        <dbReference type="EC" id="2.5.1.16"/>
    </reaction>
</comment>
<comment type="pathway">
    <text evidence="1">Amine and polyamine biosynthesis; spermidine biosynthesis; spermidine from putrescine: step 1/1.</text>
</comment>
<comment type="subunit">
    <text evidence="1">Homodimer or homotetramer.</text>
</comment>
<comment type="subcellular location">
    <subcellularLocation>
        <location evidence="1">Cytoplasm</location>
    </subcellularLocation>
</comment>
<comment type="similarity">
    <text evidence="1">Belongs to the spermidine/spermine synthase family.</text>
</comment>
<feature type="chain" id="PRO_1000099279" description="Polyamine aminopropyltransferase">
    <location>
        <begin position="1"/>
        <end position="284"/>
    </location>
</feature>
<feature type="domain" description="PABS" evidence="1">
    <location>
        <begin position="2"/>
        <end position="237"/>
    </location>
</feature>
<feature type="active site" description="Proton acceptor" evidence="1">
    <location>
        <position position="155"/>
    </location>
</feature>
<feature type="binding site" evidence="1">
    <location>
        <position position="31"/>
    </location>
    <ligand>
        <name>S-methyl-5'-thioadenosine</name>
        <dbReference type="ChEBI" id="CHEBI:17509"/>
    </ligand>
</feature>
<feature type="binding site" evidence="1">
    <location>
        <position position="62"/>
    </location>
    <ligand>
        <name>spermidine</name>
        <dbReference type="ChEBI" id="CHEBI:57834"/>
    </ligand>
</feature>
<feature type="binding site" evidence="1">
    <location>
        <position position="86"/>
    </location>
    <ligand>
        <name>spermidine</name>
        <dbReference type="ChEBI" id="CHEBI:57834"/>
    </ligand>
</feature>
<feature type="binding site" evidence="1">
    <location>
        <position position="106"/>
    </location>
    <ligand>
        <name>S-methyl-5'-thioadenosine</name>
        <dbReference type="ChEBI" id="CHEBI:17509"/>
    </ligand>
</feature>
<feature type="binding site" evidence="1">
    <location>
        <begin position="137"/>
        <end position="138"/>
    </location>
    <ligand>
        <name>S-methyl-5'-thioadenosine</name>
        <dbReference type="ChEBI" id="CHEBI:17509"/>
    </ligand>
</feature>
<feature type="binding site" evidence="1">
    <location>
        <begin position="155"/>
        <end position="158"/>
    </location>
    <ligand>
        <name>spermidine</name>
        <dbReference type="ChEBI" id="CHEBI:57834"/>
    </ligand>
</feature>
<feature type="binding site" evidence="1">
    <location>
        <position position="162"/>
    </location>
    <ligand>
        <name>S-methyl-5'-thioadenosine</name>
        <dbReference type="ChEBI" id="CHEBI:17509"/>
    </ligand>
</feature>
<dbReference type="EC" id="2.5.1.16" evidence="1"/>
<dbReference type="EMBL" id="CP001056">
    <property type="protein sequence ID" value="ACD24838.1"/>
    <property type="molecule type" value="Genomic_DNA"/>
</dbReference>
<dbReference type="SMR" id="B2TMY2"/>
<dbReference type="KEGG" id="cbk:CLL_A1013"/>
<dbReference type="PATRIC" id="fig|935198.13.peg.962"/>
<dbReference type="HOGENOM" id="CLU_048199_0_0_9"/>
<dbReference type="UniPathway" id="UPA00248">
    <property type="reaction ID" value="UER00314"/>
</dbReference>
<dbReference type="Proteomes" id="UP000001195">
    <property type="component" value="Chromosome"/>
</dbReference>
<dbReference type="GO" id="GO:0005829">
    <property type="term" value="C:cytosol"/>
    <property type="evidence" value="ECO:0007669"/>
    <property type="project" value="TreeGrafter"/>
</dbReference>
<dbReference type="GO" id="GO:0004766">
    <property type="term" value="F:spermidine synthase activity"/>
    <property type="evidence" value="ECO:0007669"/>
    <property type="project" value="UniProtKB-UniRule"/>
</dbReference>
<dbReference type="GO" id="GO:0008295">
    <property type="term" value="P:spermidine biosynthetic process"/>
    <property type="evidence" value="ECO:0007669"/>
    <property type="project" value="UniProtKB-UniRule"/>
</dbReference>
<dbReference type="CDD" id="cd02440">
    <property type="entry name" value="AdoMet_MTases"/>
    <property type="match status" value="1"/>
</dbReference>
<dbReference type="Gene3D" id="2.30.140.10">
    <property type="entry name" value="Spermidine synthase, tetramerisation domain"/>
    <property type="match status" value="1"/>
</dbReference>
<dbReference type="Gene3D" id="3.40.50.150">
    <property type="entry name" value="Vaccinia Virus protein VP39"/>
    <property type="match status" value="1"/>
</dbReference>
<dbReference type="HAMAP" id="MF_00198">
    <property type="entry name" value="Spermidine_synth"/>
    <property type="match status" value="1"/>
</dbReference>
<dbReference type="InterPro" id="IPR030374">
    <property type="entry name" value="PABS"/>
</dbReference>
<dbReference type="InterPro" id="IPR029063">
    <property type="entry name" value="SAM-dependent_MTases_sf"/>
</dbReference>
<dbReference type="InterPro" id="IPR001045">
    <property type="entry name" value="Spermi_synthase"/>
</dbReference>
<dbReference type="InterPro" id="IPR035246">
    <property type="entry name" value="Spermidine_synt_N"/>
</dbReference>
<dbReference type="InterPro" id="IPR037163">
    <property type="entry name" value="Spermidine_synt_N_sf"/>
</dbReference>
<dbReference type="NCBIfam" id="NF002010">
    <property type="entry name" value="PRK00811.1"/>
    <property type="match status" value="1"/>
</dbReference>
<dbReference type="NCBIfam" id="TIGR00417">
    <property type="entry name" value="speE"/>
    <property type="match status" value="1"/>
</dbReference>
<dbReference type="PANTHER" id="PTHR11558:SF11">
    <property type="entry name" value="SPERMIDINE SYNTHASE"/>
    <property type="match status" value="1"/>
</dbReference>
<dbReference type="PANTHER" id="PTHR11558">
    <property type="entry name" value="SPERMIDINE/SPERMINE SYNTHASE"/>
    <property type="match status" value="1"/>
</dbReference>
<dbReference type="Pfam" id="PF17284">
    <property type="entry name" value="Spermine_synt_N"/>
    <property type="match status" value="1"/>
</dbReference>
<dbReference type="Pfam" id="PF01564">
    <property type="entry name" value="Spermine_synth"/>
    <property type="match status" value="1"/>
</dbReference>
<dbReference type="SUPFAM" id="SSF53335">
    <property type="entry name" value="S-adenosyl-L-methionine-dependent methyltransferases"/>
    <property type="match status" value="1"/>
</dbReference>
<dbReference type="PROSITE" id="PS51006">
    <property type="entry name" value="PABS_2"/>
    <property type="match status" value="1"/>
</dbReference>
<organism>
    <name type="scientific">Clostridium botulinum (strain Eklund 17B / Type B)</name>
    <dbReference type="NCBI Taxonomy" id="935198"/>
    <lineage>
        <taxon>Bacteria</taxon>
        <taxon>Bacillati</taxon>
        <taxon>Bacillota</taxon>
        <taxon>Clostridia</taxon>
        <taxon>Eubacteriales</taxon>
        <taxon>Clostridiaceae</taxon>
        <taxon>Clostridium</taxon>
    </lineage>
</organism>
<gene>
    <name evidence="1" type="primary">speE</name>
    <name type="ordered locus">CLL_A1013</name>
</gene>
<proteinExistence type="inferred from homology"/>
<keyword id="KW-0963">Cytoplasm</keyword>
<keyword id="KW-0620">Polyamine biosynthesis</keyword>
<keyword id="KW-0745">Spermidine biosynthesis</keyword>
<keyword id="KW-0808">Transferase</keyword>
<sequence length="284" mass="33126">MELWYTEKHTEYVKFSIKVDRELYTEQSKFQRIDILESKEFGKFFTLDGLMMVTEKDEFIYHDMIVHVPMATNPNIKNVLVIGAGDGGTIRELTRYKTIEKIDMVEIDERVVEVCKKYLPKTAGKLEEERVNIVYEDGLKFVRNKENEYDLIIVDSTDPFGPGEGLFTKEFYGNCYKALSEDGILVNQHESPYYEYYAKSMKDAHEKIQGLFKINKVYQAHIPTYPSGHWLFGFASKKYDPIKDLNAEAWNSLGLKTKYYNTDLHVGCFALPTYVIDMLNENKE</sequence>
<protein>
    <recommendedName>
        <fullName evidence="1">Polyamine aminopropyltransferase</fullName>
    </recommendedName>
    <alternativeName>
        <fullName evidence="1">Putrescine aminopropyltransferase</fullName>
        <shortName evidence="1">PAPT</shortName>
    </alternativeName>
    <alternativeName>
        <fullName evidence="1">Spermidine synthase</fullName>
        <shortName evidence="1">SPDS</shortName>
        <shortName evidence="1">SPDSY</shortName>
        <ecNumber evidence="1">2.5.1.16</ecNumber>
    </alternativeName>
</protein>
<name>SPEE_CLOBB</name>